<proteinExistence type="inferred from homology"/>
<feature type="chain" id="PRO_0000107719" description="Nucleotide-binding protein LBA0691">
    <location>
        <begin position="1"/>
        <end position="293"/>
    </location>
</feature>
<feature type="binding site" evidence="1">
    <location>
        <begin position="13"/>
        <end position="20"/>
    </location>
    <ligand>
        <name>ATP</name>
        <dbReference type="ChEBI" id="CHEBI:30616"/>
    </ligand>
</feature>
<feature type="binding site" evidence="1">
    <location>
        <begin position="63"/>
        <end position="66"/>
    </location>
    <ligand>
        <name>GTP</name>
        <dbReference type="ChEBI" id="CHEBI:37565"/>
    </ligand>
</feature>
<evidence type="ECO:0000255" key="1">
    <source>
        <dbReference type="HAMAP-Rule" id="MF_00636"/>
    </source>
</evidence>
<organism>
    <name type="scientific">Lactobacillus acidophilus (strain ATCC 700396 / NCK56 / N2 / NCFM)</name>
    <dbReference type="NCBI Taxonomy" id="272621"/>
    <lineage>
        <taxon>Bacteria</taxon>
        <taxon>Bacillati</taxon>
        <taxon>Bacillota</taxon>
        <taxon>Bacilli</taxon>
        <taxon>Lactobacillales</taxon>
        <taxon>Lactobacillaceae</taxon>
        <taxon>Lactobacillus</taxon>
    </lineage>
</organism>
<reference key="1">
    <citation type="journal article" date="2005" name="Proc. Natl. Acad. Sci. U.S.A.">
        <title>Complete genome sequence of the probiotic lactic acid bacterium Lactobacillus acidophilus NCFM.</title>
        <authorList>
            <person name="Altermann E."/>
            <person name="Russell W.M."/>
            <person name="Azcarate-Peril M.A."/>
            <person name="Barrangou R."/>
            <person name="Buck B.L."/>
            <person name="McAuliffe O."/>
            <person name="Souther N."/>
            <person name="Dobson A."/>
            <person name="Duong T."/>
            <person name="Callanan M."/>
            <person name="Lick S."/>
            <person name="Hamrick A."/>
            <person name="Cano R."/>
            <person name="Klaenhammer T.R."/>
        </authorList>
    </citation>
    <scope>NUCLEOTIDE SEQUENCE [LARGE SCALE GENOMIC DNA]</scope>
    <source>
        <strain>ATCC 700396 / NCK56 / N2 / NCFM</strain>
    </source>
</reference>
<dbReference type="EMBL" id="CP000033">
    <property type="protein sequence ID" value="AAV42566.1"/>
    <property type="molecule type" value="Genomic_DNA"/>
</dbReference>
<dbReference type="RefSeq" id="YP_193597.1">
    <property type="nucleotide sequence ID" value="NC_006814.3"/>
</dbReference>
<dbReference type="SMR" id="Q5FL58"/>
<dbReference type="STRING" id="272621.LBA0691"/>
<dbReference type="KEGG" id="lac:LBA0691"/>
<dbReference type="PATRIC" id="fig|272621.13.peg.660"/>
<dbReference type="eggNOG" id="COG1660">
    <property type="taxonomic scope" value="Bacteria"/>
</dbReference>
<dbReference type="HOGENOM" id="CLU_059558_0_0_9"/>
<dbReference type="OrthoDB" id="9784461at2"/>
<dbReference type="BioCyc" id="LACI272621:G1G49-712-MONOMER"/>
<dbReference type="Proteomes" id="UP000006381">
    <property type="component" value="Chromosome"/>
</dbReference>
<dbReference type="GO" id="GO:0005524">
    <property type="term" value="F:ATP binding"/>
    <property type="evidence" value="ECO:0007669"/>
    <property type="project" value="UniProtKB-UniRule"/>
</dbReference>
<dbReference type="GO" id="GO:0005525">
    <property type="term" value="F:GTP binding"/>
    <property type="evidence" value="ECO:0007669"/>
    <property type="project" value="UniProtKB-UniRule"/>
</dbReference>
<dbReference type="Gene3D" id="3.40.50.300">
    <property type="entry name" value="P-loop containing nucleotide triphosphate hydrolases"/>
    <property type="match status" value="1"/>
</dbReference>
<dbReference type="HAMAP" id="MF_00636">
    <property type="entry name" value="RapZ_like"/>
    <property type="match status" value="1"/>
</dbReference>
<dbReference type="InterPro" id="IPR027417">
    <property type="entry name" value="P-loop_NTPase"/>
</dbReference>
<dbReference type="InterPro" id="IPR005337">
    <property type="entry name" value="RapZ-like"/>
</dbReference>
<dbReference type="InterPro" id="IPR053930">
    <property type="entry name" value="RapZ-like_N"/>
</dbReference>
<dbReference type="InterPro" id="IPR053931">
    <property type="entry name" value="RapZ_C"/>
</dbReference>
<dbReference type="NCBIfam" id="NF003828">
    <property type="entry name" value="PRK05416.1"/>
    <property type="match status" value="1"/>
</dbReference>
<dbReference type="PANTHER" id="PTHR30448">
    <property type="entry name" value="RNASE ADAPTER PROTEIN RAPZ"/>
    <property type="match status" value="1"/>
</dbReference>
<dbReference type="PANTHER" id="PTHR30448:SF0">
    <property type="entry name" value="RNASE ADAPTER PROTEIN RAPZ"/>
    <property type="match status" value="1"/>
</dbReference>
<dbReference type="Pfam" id="PF22740">
    <property type="entry name" value="PapZ_C"/>
    <property type="match status" value="1"/>
</dbReference>
<dbReference type="Pfam" id="PF03668">
    <property type="entry name" value="RapZ-like_N"/>
    <property type="match status" value="1"/>
</dbReference>
<dbReference type="PIRSF" id="PIRSF005052">
    <property type="entry name" value="P-loopkin"/>
    <property type="match status" value="1"/>
</dbReference>
<dbReference type="SUPFAM" id="SSF52540">
    <property type="entry name" value="P-loop containing nucleoside triphosphate hydrolases"/>
    <property type="match status" value="1"/>
</dbReference>
<accession>Q5FL58</accession>
<protein>
    <recommendedName>
        <fullName evidence="1">Nucleotide-binding protein LBA0691</fullName>
    </recommendedName>
</protein>
<sequence length="293" mass="33418">MADEKKQLLIVTGMSGAGKTVVAHDLEDMGYFVVDNLPPTLLGSFWDLINNSNDFHKVAVVIDLRVKAFYTDLLDEVNSLEDNGNVQATILYLDASDDVLVARYKETRRLPPLANNGKGRLLDGIQEERRILTPIKNRSNYIVDTSNLSTKELKQKLINTFSDKKRQPFSIEVMSFGFKYGMPIDADIVMDVRFLPNPFYIPELRPFTGLDKRVFDYVMNKEETQVFYKKLLDMLETAIPGYIKEGKEKLTIAIGCTGGQHRSVSIAQQLARDLSKKYPVDITHREISRYIRK</sequence>
<name>Y691_LACAC</name>
<comment type="function">
    <text evidence="1">Displays ATPase and GTPase activities.</text>
</comment>
<comment type="similarity">
    <text evidence="1">Belongs to the RapZ-like family.</text>
</comment>
<keyword id="KW-0067">ATP-binding</keyword>
<keyword id="KW-0342">GTP-binding</keyword>
<keyword id="KW-0547">Nucleotide-binding</keyword>
<keyword id="KW-1185">Reference proteome</keyword>
<gene>
    <name type="ordered locus">LBA0691</name>
</gene>